<reference key="1">
    <citation type="journal article" date="2003" name="Nature">
        <title>The genome of a motile marine Synechococcus.</title>
        <authorList>
            <person name="Palenik B."/>
            <person name="Brahamsha B."/>
            <person name="Larimer F.W."/>
            <person name="Land M.L."/>
            <person name="Hauser L."/>
            <person name="Chain P."/>
            <person name="Lamerdin J.E."/>
            <person name="Regala W."/>
            <person name="Allen E.E."/>
            <person name="McCarren J."/>
            <person name="Paulsen I.T."/>
            <person name="Dufresne A."/>
            <person name="Partensky F."/>
            <person name="Webb E.A."/>
            <person name="Waterbury J."/>
        </authorList>
    </citation>
    <scope>NUCLEOTIDE SEQUENCE [LARGE SCALE GENOMIC DNA]</scope>
    <source>
        <strain>WH8102</strain>
    </source>
</reference>
<name>PYRG_PARMW</name>
<feature type="chain" id="PRO_0000266246" description="CTP synthase">
    <location>
        <begin position="1"/>
        <end position="544"/>
    </location>
</feature>
<feature type="domain" description="Glutamine amidotransferase type-1" evidence="1">
    <location>
        <begin position="292"/>
        <end position="534"/>
    </location>
</feature>
<feature type="region of interest" description="Amidoligase domain" evidence="1">
    <location>
        <begin position="1"/>
        <end position="267"/>
    </location>
</feature>
<feature type="active site" description="Nucleophile; for glutamine hydrolysis" evidence="1">
    <location>
        <position position="381"/>
    </location>
</feature>
<feature type="active site" evidence="1">
    <location>
        <position position="507"/>
    </location>
</feature>
<feature type="active site" evidence="1">
    <location>
        <position position="509"/>
    </location>
</feature>
<feature type="binding site" evidence="1">
    <location>
        <position position="13"/>
    </location>
    <ligand>
        <name>CTP</name>
        <dbReference type="ChEBI" id="CHEBI:37563"/>
        <note>allosteric inhibitor</note>
    </ligand>
</feature>
<feature type="binding site" evidence="1">
    <location>
        <position position="13"/>
    </location>
    <ligand>
        <name>UTP</name>
        <dbReference type="ChEBI" id="CHEBI:46398"/>
    </ligand>
</feature>
<feature type="binding site" evidence="1">
    <location>
        <begin position="14"/>
        <end position="19"/>
    </location>
    <ligand>
        <name>ATP</name>
        <dbReference type="ChEBI" id="CHEBI:30616"/>
    </ligand>
</feature>
<feature type="binding site" evidence="1">
    <location>
        <position position="71"/>
    </location>
    <ligand>
        <name>ATP</name>
        <dbReference type="ChEBI" id="CHEBI:30616"/>
    </ligand>
</feature>
<feature type="binding site" evidence="1">
    <location>
        <position position="71"/>
    </location>
    <ligand>
        <name>Mg(2+)</name>
        <dbReference type="ChEBI" id="CHEBI:18420"/>
    </ligand>
</feature>
<feature type="binding site" evidence="1">
    <location>
        <position position="141"/>
    </location>
    <ligand>
        <name>Mg(2+)</name>
        <dbReference type="ChEBI" id="CHEBI:18420"/>
    </ligand>
</feature>
<feature type="binding site" evidence="1">
    <location>
        <begin position="148"/>
        <end position="150"/>
    </location>
    <ligand>
        <name>CTP</name>
        <dbReference type="ChEBI" id="CHEBI:37563"/>
        <note>allosteric inhibitor</note>
    </ligand>
</feature>
<feature type="binding site" evidence="1">
    <location>
        <begin position="188"/>
        <end position="193"/>
    </location>
    <ligand>
        <name>CTP</name>
        <dbReference type="ChEBI" id="CHEBI:37563"/>
        <note>allosteric inhibitor</note>
    </ligand>
</feature>
<feature type="binding site" evidence="1">
    <location>
        <begin position="188"/>
        <end position="193"/>
    </location>
    <ligand>
        <name>UTP</name>
        <dbReference type="ChEBI" id="CHEBI:46398"/>
    </ligand>
</feature>
<feature type="binding site" evidence="1">
    <location>
        <position position="224"/>
    </location>
    <ligand>
        <name>CTP</name>
        <dbReference type="ChEBI" id="CHEBI:37563"/>
        <note>allosteric inhibitor</note>
    </ligand>
</feature>
<feature type="binding site" evidence="1">
    <location>
        <position position="224"/>
    </location>
    <ligand>
        <name>UTP</name>
        <dbReference type="ChEBI" id="CHEBI:46398"/>
    </ligand>
</feature>
<feature type="binding site" evidence="1">
    <location>
        <position position="354"/>
    </location>
    <ligand>
        <name>L-glutamine</name>
        <dbReference type="ChEBI" id="CHEBI:58359"/>
    </ligand>
</feature>
<feature type="binding site" evidence="1">
    <location>
        <begin position="382"/>
        <end position="385"/>
    </location>
    <ligand>
        <name>L-glutamine</name>
        <dbReference type="ChEBI" id="CHEBI:58359"/>
    </ligand>
</feature>
<feature type="binding site" evidence="1">
    <location>
        <position position="405"/>
    </location>
    <ligand>
        <name>L-glutamine</name>
        <dbReference type="ChEBI" id="CHEBI:58359"/>
    </ligand>
</feature>
<feature type="binding site" evidence="1">
    <location>
        <position position="462"/>
    </location>
    <ligand>
        <name>L-glutamine</name>
        <dbReference type="ChEBI" id="CHEBI:58359"/>
    </ligand>
</feature>
<sequence>MAKFVFITGGVVSSIGKGIVAASLGRLLKSRGYNVSILKLDPYLNVDPGTMSPIQHGEVFVTEDGAETDLDLGHYERFTDTAMSRLNSVTTGSIYQAVINKERRGDYNGGTVQVIPHITGEIRERIHRVAANSNADVVITEIGGTVGDIESLPFLEAIREFSGDVGRNDLAYIHVTLLPFIGTSGELKTKPTQHSVKELRSIGIQPDVLVCRSDRTISEEMKRKIGGFCGVPTRAVIPSLDAESIYAVPLTLEQEGLCREVLDVLDLTDHDSDMAAWQELVHKLRNPGPAVKVALVGKYIQLNDAYLSVVEALRHACIAQDASLDLHWVCAEQIESDGAQALLKGMDAVVVPGGFGNRGVDGKIAAIRWAREQRVPFLGLCLGMQTAVIEWARNQAGLTEATSAELDAGTPHPVIHLLPEQQDVVDLGGTMRLGVYPCRIAPDTLAHRLYGDQVVYERHRHRYEFNNAYRNLFLESGYVVSGSSPDGRLVELIELKGHPFFTACQYHPEFLSRPGRPHPLFQGLIEAAQQRLPSSPVEAIQTQR</sequence>
<organism>
    <name type="scientific">Parasynechococcus marenigrum (strain WH8102)</name>
    <dbReference type="NCBI Taxonomy" id="84588"/>
    <lineage>
        <taxon>Bacteria</taxon>
        <taxon>Bacillati</taxon>
        <taxon>Cyanobacteriota</taxon>
        <taxon>Cyanophyceae</taxon>
        <taxon>Synechococcales</taxon>
        <taxon>Prochlorococcaceae</taxon>
        <taxon>Parasynechococcus</taxon>
        <taxon>Parasynechococcus marenigrum</taxon>
    </lineage>
</organism>
<gene>
    <name evidence="1" type="primary">pyrG</name>
    <name type="ordered locus">SYNW2428</name>
</gene>
<accession>Q7U3K4</accession>
<evidence type="ECO:0000255" key="1">
    <source>
        <dbReference type="HAMAP-Rule" id="MF_01227"/>
    </source>
</evidence>
<protein>
    <recommendedName>
        <fullName evidence="1">CTP synthase</fullName>
        <ecNumber evidence="1">6.3.4.2</ecNumber>
    </recommendedName>
    <alternativeName>
        <fullName evidence="1">Cytidine 5'-triphosphate synthase</fullName>
    </alternativeName>
    <alternativeName>
        <fullName evidence="1">Cytidine triphosphate synthetase</fullName>
        <shortName evidence="1">CTP synthetase</shortName>
        <shortName evidence="1">CTPS</shortName>
    </alternativeName>
    <alternativeName>
        <fullName evidence="1">UTP--ammonia ligase</fullName>
    </alternativeName>
</protein>
<dbReference type="EC" id="6.3.4.2" evidence="1"/>
<dbReference type="EMBL" id="BX569695">
    <property type="protein sequence ID" value="CAE08943.1"/>
    <property type="molecule type" value="Genomic_DNA"/>
</dbReference>
<dbReference type="RefSeq" id="WP_011129281.1">
    <property type="nucleotide sequence ID" value="NC_005070.1"/>
</dbReference>
<dbReference type="SMR" id="Q7U3K4"/>
<dbReference type="STRING" id="84588.SYNW2428"/>
<dbReference type="KEGG" id="syw:SYNW2428"/>
<dbReference type="eggNOG" id="COG0504">
    <property type="taxonomic scope" value="Bacteria"/>
</dbReference>
<dbReference type="HOGENOM" id="CLU_011675_5_0_3"/>
<dbReference type="UniPathway" id="UPA00159">
    <property type="reaction ID" value="UER00277"/>
</dbReference>
<dbReference type="Proteomes" id="UP000001422">
    <property type="component" value="Chromosome"/>
</dbReference>
<dbReference type="GO" id="GO:0005829">
    <property type="term" value="C:cytosol"/>
    <property type="evidence" value="ECO:0007669"/>
    <property type="project" value="TreeGrafter"/>
</dbReference>
<dbReference type="GO" id="GO:0005524">
    <property type="term" value="F:ATP binding"/>
    <property type="evidence" value="ECO:0007669"/>
    <property type="project" value="UniProtKB-KW"/>
</dbReference>
<dbReference type="GO" id="GO:0003883">
    <property type="term" value="F:CTP synthase activity"/>
    <property type="evidence" value="ECO:0007669"/>
    <property type="project" value="UniProtKB-UniRule"/>
</dbReference>
<dbReference type="GO" id="GO:0004359">
    <property type="term" value="F:glutaminase activity"/>
    <property type="evidence" value="ECO:0007669"/>
    <property type="project" value="RHEA"/>
</dbReference>
<dbReference type="GO" id="GO:0042802">
    <property type="term" value="F:identical protein binding"/>
    <property type="evidence" value="ECO:0007669"/>
    <property type="project" value="TreeGrafter"/>
</dbReference>
<dbReference type="GO" id="GO:0046872">
    <property type="term" value="F:metal ion binding"/>
    <property type="evidence" value="ECO:0007669"/>
    <property type="project" value="UniProtKB-KW"/>
</dbReference>
<dbReference type="GO" id="GO:0044210">
    <property type="term" value="P:'de novo' CTP biosynthetic process"/>
    <property type="evidence" value="ECO:0007669"/>
    <property type="project" value="UniProtKB-UniRule"/>
</dbReference>
<dbReference type="GO" id="GO:0019856">
    <property type="term" value="P:pyrimidine nucleobase biosynthetic process"/>
    <property type="evidence" value="ECO:0007669"/>
    <property type="project" value="TreeGrafter"/>
</dbReference>
<dbReference type="CDD" id="cd03113">
    <property type="entry name" value="CTPS_N"/>
    <property type="match status" value="1"/>
</dbReference>
<dbReference type="CDD" id="cd01746">
    <property type="entry name" value="GATase1_CTP_Synthase"/>
    <property type="match status" value="1"/>
</dbReference>
<dbReference type="FunFam" id="3.40.50.300:FF:000009">
    <property type="entry name" value="CTP synthase"/>
    <property type="match status" value="1"/>
</dbReference>
<dbReference type="FunFam" id="3.40.50.880:FF:000002">
    <property type="entry name" value="CTP synthase"/>
    <property type="match status" value="1"/>
</dbReference>
<dbReference type="Gene3D" id="3.40.50.880">
    <property type="match status" value="1"/>
</dbReference>
<dbReference type="Gene3D" id="3.40.50.300">
    <property type="entry name" value="P-loop containing nucleotide triphosphate hydrolases"/>
    <property type="match status" value="1"/>
</dbReference>
<dbReference type="HAMAP" id="MF_01227">
    <property type="entry name" value="PyrG"/>
    <property type="match status" value="1"/>
</dbReference>
<dbReference type="InterPro" id="IPR029062">
    <property type="entry name" value="Class_I_gatase-like"/>
</dbReference>
<dbReference type="InterPro" id="IPR004468">
    <property type="entry name" value="CTP_synthase"/>
</dbReference>
<dbReference type="InterPro" id="IPR017456">
    <property type="entry name" value="CTP_synthase_N"/>
</dbReference>
<dbReference type="InterPro" id="IPR017926">
    <property type="entry name" value="GATASE"/>
</dbReference>
<dbReference type="InterPro" id="IPR033828">
    <property type="entry name" value="GATase1_CTP_Synthase"/>
</dbReference>
<dbReference type="InterPro" id="IPR027417">
    <property type="entry name" value="P-loop_NTPase"/>
</dbReference>
<dbReference type="NCBIfam" id="NF003792">
    <property type="entry name" value="PRK05380.1"/>
    <property type="match status" value="1"/>
</dbReference>
<dbReference type="NCBIfam" id="TIGR00337">
    <property type="entry name" value="PyrG"/>
    <property type="match status" value="1"/>
</dbReference>
<dbReference type="PANTHER" id="PTHR11550">
    <property type="entry name" value="CTP SYNTHASE"/>
    <property type="match status" value="1"/>
</dbReference>
<dbReference type="PANTHER" id="PTHR11550:SF0">
    <property type="entry name" value="CTP SYNTHASE-RELATED"/>
    <property type="match status" value="1"/>
</dbReference>
<dbReference type="Pfam" id="PF06418">
    <property type="entry name" value="CTP_synth_N"/>
    <property type="match status" value="1"/>
</dbReference>
<dbReference type="Pfam" id="PF00117">
    <property type="entry name" value="GATase"/>
    <property type="match status" value="1"/>
</dbReference>
<dbReference type="SUPFAM" id="SSF52317">
    <property type="entry name" value="Class I glutamine amidotransferase-like"/>
    <property type="match status" value="1"/>
</dbReference>
<dbReference type="SUPFAM" id="SSF52540">
    <property type="entry name" value="P-loop containing nucleoside triphosphate hydrolases"/>
    <property type="match status" value="1"/>
</dbReference>
<dbReference type="PROSITE" id="PS51273">
    <property type="entry name" value="GATASE_TYPE_1"/>
    <property type="match status" value="1"/>
</dbReference>
<comment type="function">
    <text evidence="1">Catalyzes the ATP-dependent amination of UTP to CTP with either L-glutamine or ammonia as the source of nitrogen. Regulates intracellular CTP levels through interactions with the four ribonucleotide triphosphates.</text>
</comment>
<comment type="catalytic activity">
    <reaction evidence="1">
        <text>UTP + L-glutamine + ATP + H2O = CTP + L-glutamate + ADP + phosphate + 2 H(+)</text>
        <dbReference type="Rhea" id="RHEA:26426"/>
        <dbReference type="ChEBI" id="CHEBI:15377"/>
        <dbReference type="ChEBI" id="CHEBI:15378"/>
        <dbReference type="ChEBI" id="CHEBI:29985"/>
        <dbReference type="ChEBI" id="CHEBI:30616"/>
        <dbReference type="ChEBI" id="CHEBI:37563"/>
        <dbReference type="ChEBI" id="CHEBI:43474"/>
        <dbReference type="ChEBI" id="CHEBI:46398"/>
        <dbReference type="ChEBI" id="CHEBI:58359"/>
        <dbReference type="ChEBI" id="CHEBI:456216"/>
        <dbReference type="EC" id="6.3.4.2"/>
    </reaction>
</comment>
<comment type="catalytic activity">
    <reaction evidence="1">
        <text>L-glutamine + H2O = L-glutamate + NH4(+)</text>
        <dbReference type="Rhea" id="RHEA:15889"/>
        <dbReference type="ChEBI" id="CHEBI:15377"/>
        <dbReference type="ChEBI" id="CHEBI:28938"/>
        <dbReference type="ChEBI" id="CHEBI:29985"/>
        <dbReference type="ChEBI" id="CHEBI:58359"/>
    </reaction>
</comment>
<comment type="catalytic activity">
    <reaction evidence="1">
        <text>UTP + NH4(+) + ATP = CTP + ADP + phosphate + 2 H(+)</text>
        <dbReference type="Rhea" id="RHEA:16597"/>
        <dbReference type="ChEBI" id="CHEBI:15378"/>
        <dbReference type="ChEBI" id="CHEBI:28938"/>
        <dbReference type="ChEBI" id="CHEBI:30616"/>
        <dbReference type="ChEBI" id="CHEBI:37563"/>
        <dbReference type="ChEBI" id="CHEBI:43474"/>
        <dbReference type="ChEBI" id="CHEBI:46398"/>
        <dbReference type="ChEBI" id="CHEBI:456216"/>
    </reaction>
</comment>
<comment type="activity regulation">
    <text evidence="1">Allosterically activated by GTP, when glutamine is the substrate; GTP has no effect on the reaction when ammonia is the substrate. The allosteric effector GTP functions by stabilizing the protein conformation that binds the tetrahedral intermediate(s) formed during glutamine hydrolysis. Inhibited by the product CTP, via allosteric rather than competitive inhibition.</text>
</comment>
<comment type="pathway">
    <text evidence="1">Pyrimidine metabolism; CTP biosynthesis via de novo pathway; CTP from UDP: step 2/2.</text>
</comment>
<comment type="subunit">
    <text evidence="1">Homotetramer.</text>
</comment>
<comment type="miscellaneous">
    <text evidence="1">CTPSs have evolved a hybrid strategy for distinguishing between UTP and CTP. The overlapping regions of the product feedback inhibitory and substrate sites recognize a common feature in both compounds, the triphosphate moiety. To differentiate isosteric substrate and product pyrimidine rings, an additional pocket far from the expected kinase/ligase catalytic site, specifically recognizes the cytosine and ribose portions of the product inhibitor.</text>
</comment>
<comment type="similarity">
    <text evidence="1">Belongs to the CTP synthase family.</text>
</comment>
<proteinExistence type="inferred from homology"/>
<keyword id="KW-0067">ATP-binding</keyword>
<keyword id="KW-0315">Glutamine amidotransferase</keyword>
<keyword id="KW-0436">Ligase</keyword>
<keyword id="KW-0460">Magnesium</keyword>
<keyword id="KW-0479">Metal-binding</keyword>
<keyword id="KW-0547">Nucleotide-binding</keyword>
<keyword id="KW-0665">Pyrimidine biosynthesis</keyword>